<accession>Q49ZE6</accession>
<keyword id="KW-0963">Cytoplasm</keyword>
<keyword id="KW-0396">Initiation factor</keyword>
<keyword id="KW-0648">Protein biosynthesis</keyword>
<keyword id="KW-1185">Reference proteome</keyword>
<keyword id="KW-0694">RNA-binding</keyword>
<keyword id="KW-0699">rRNA-binding</keyword>
<dbReference type="EMBL" id="AP008934">
    <property type="protein sequence ID" value="BAE17830.1"/>
    <property type="molecule type" value="Genomic_DNA"/>
</dbReference>
<dbReference type="RefSeq" id="WP_001118443.1">
    <property type="nucleotide sequence ID" value="NZ_MTGA01000036.1"/>
</dbReference>
<dbReference type="SMR" id="Q49ZE6"/>
<dbReference type="GeneID" id="98346540"/>
<dbReference type="KEGG" id="ssp:SSP0685"/>
<dbReference type="eggNOG" id="COG0361">
    <property type="taxonomic scope" value="Bacteria"/>
</dbReference>
<dbReference type="HOGENOM" id="CLU_151267_1_0_9"/>
<dbReference type="OrthoDB" id="9803250at2"/>
<dbReference type="Proteomes" id="UP000006371">
    <property type="component" value="Chromosome"/>
</dbReference>
<dbReference type="GO" id="GO:0005829">
    <property type="term" value="C:cytosol"/>
    <property type="evidence" value="ECO:0007669"/>
    <property type="project" value="TreeGrafter"/>
</dbReference>
<dbReference type="GO" id="GO:0043022">
    <property type="term" value="F:ribosome binding"/>
    <property type="evidence" value="ECO:0007669"/>
    <property type="project" value="UniProtKB-UniRule"/>
</dbReference>
<dbReference type="GO" id="GO:0019843">
    <property type="term" value="F:rRNA binding"/>
    <property type="evidence" value="ECO:0007669"/>
    <property type="project" value="UniProtKB-UniRule"/>
</dbReference>
<dbReference type="GO" id="GO:0003743">
    <property type="term" value="F:translation initiation factor activity"/>
    <property type="evidence" value="ECO:0007669"/>
    <property type="project" value="UniProtKB-UniRule"/>
</dbReference>
<dbReference type="CDD" id="cd04451">
    <property type="entry name" value="S1_IF1"/>
    <property type="match status" value="1"/>
</dbReference>
<dbReference type="FunFam" id="2.40.50.140:FF:000002">
    <property type="entry name" value="Translation initiation factor IF-1"/>
    <property type="match status" value="1"/>
</dbReference>
<dbReference type="Gene3D" id="2.40.50.140">
    <property type="entry name" value="Nucleic acid-binding proteins"/>
    <property type="match status" value="1"/>
</dbReference>
<dbReference type="HAMAP" id="MF_00075">
    <property type="entry name" value="IF_1"/>
    <property type="match status" value="1"/>
</dbReference>
<dbReference type="InterPro" id="IPR012340">
    <property type="entry name" value="NA-bd_OB-fold"/>
</dbReference>
<dbReference type="InterPro" id="IPR006196">
    <property type="entry name" value="RNA-binding_domain_S1_IF1"/>
</dbReference>
<dbReference type="InterPro" id="IPR003029">
    <property type="entry name" value="S1_domain"/>
</dbReference>
<dbReference type="InterPro" id="IPR004368">
    <property type="entry name" value="TIF_IF1"/>
</dbReference>
<dbReference type="NCBIfam" id="TIGR00008">
    <property type="entry name" value="infA"/>
    <property type="match status" value="1"/>
</dbReference>
<dbReference type="PANTHER" id="PTHR33370">
    <property type="entry name" value="TRANSLATION INITIATION FACTOR IF-1, CHLOROPLASTIC"/>
    <property type="match status" value="1"/>
</dbReference>
<dbReference type="PANTHER" id="PTHR33370:SF1">
    <property type="entry name" value="TRANSLATION INITIATION FACTOR IF-1, CHLOROPLASTIC"/>
    <property type="match status" value="1"/>
</dbReference>
<dbReference type="Pfam" id="PF01176">
    <property type="entry name" value="eIF-1a"/>
    <property type="match status" value="1"/>
</dbReference>
<dbReference type="SMART" id="SM00316">
    <property type="entry name" value="S1"/>
    <property type="match status" value="1"/>
</dbReference>
<dbReference type="SUPFAM" id="SSF50249">
    <property type="entry name" value="Nucleic acid-binding proteins"/>
    <property type="match status" value="1"/>
</dbReference>
<dbReference type="PROSITE" id="PS50832">
    <property type="entry name" value="S1_IF1_TYPE"/>
    <property type="match status" value="1"/>
</dbReference>
<proteinExistence type="inferred from homology"/>
<feature type="chain" id="PRO_0000263880" description="Translation initiation factor IF-1">
    <location>
        <begin position="1"/>
        <end position="72"/>
    </location>
</feature>
<feature type="domain" description="S1-like" evidence="1">
    <location>
        <begin position="1"/>
        <end position="72"/>
    </location>
</feature>
<sequence length="72" mass="8280">MAKQDVIELEGTVLDTLPNAMFKVELENGHEILAHVSGKIRMNYIRILPGDKVTVEMSPYDLTRGRITYRYK</sequence>
<comment type="function">
    <text evidence="1">One of the essential components for the initiation of protein synthesis. Stabilizes the binding of IF-2 and IF-3 on the 30S subunit to which N-formylmethionyl-tRNA(fMet) subsequently binds. Helps modulate mRNA selection, yielding the 30S pre-initiation complex (PIC). Upon addition of the 50S ribosomal subunit IF-1, IF-2 and IF-3 are released leaving the mature 70S translation initiation complex.</text>
</comment>
<comment type="subunit">
    <text evidence="1">Component of the 30S ribosomal translation pre-initiation complex which assembles on the 30S ribosome in the order IF-2 and IF-3, IF-1 and N-formylmethionyl-tRNA(fMet); mRNA recruitment can occur at any time during PIC assembly.</text>
</comment>
<comment type="subcellular location">
    <subcellularLocation>
        <location evidence="1">Cytoplasm</location>
    </subcellularLocation>
</comment>
<comment type="similarity">
    <text evidence="1">Belongs to the IF-1 family.</text>
</comment>
<reference key="1">
    <citation type="journal article" date="2005" name="Proc. Natl. Acad. Sci. U.S.A.">
        <title>Whole genome sequence of Staphylococcus saprophyticus reveals the pathogenesis of uncomplicated urinary tract infection.</title>
        <authorList>
            <person name="Kuroda M."/>
            <person name="Yamashita A."/>
            <person name="Hirakawa H."/>
            <person name="Kumano M."/>
            <person name="Morikawa K."/>
            <person name="Higashide M."/>
            <person name="Maruyama A."/>
            <person name="Inose Y."/>
            <person name="Matoba K."/>
            <person name="Toh H."/>
            <person name="Kuhara S."/>
            <person name="Hattori M."/>
            <person name="Ohta T."/>
        </authorList>
    </citation>
    <scope>NUCLEOTIDE SEQUENCE [LARGE SCALE GENOMIC DNA]</scope>
    <source>
        <strain>ATCC 15305 / DSM 20229 / NCIMB 8711 / NCTC 7292 / S-41</strain>
    </source>
</reference>
<gene>
    <name evidence="1" type="primary">infA</name>
    <name type="ordered locus">SSP0685</name>
</gene>
<evidence type="ECO:0000255" key="1">
    <source>
        <dbReference type="HAMAP-Rule" id="MF_00075"/>
    </source>
</evidence>
<protein>
    <recommendedName>
        <fullName evidence="1">Translation initiation factor IF-1</fullName>
    </recommendedName>
</protein>
<name>IF1_STAS1</name>
<organism>
    <name type="scientific">Staphylococcus saprophyticus subsp. saprophyticus (strain ATCC 15305 / DSM 20229 / NCIMB 8711 / NCTC 7292 / S-41)</name>
    <dbReference type="NCBI Taxonomy" id="342451"/>
    <lineage>
        <taxon>Bacteria</taxon>
        <taxon>Bacillati</taxon>
        <taxon>Bacillota</taxon>
        <taxon>Bacilli</taxon>
        <taxon>Bacillales</taxon>
        <taxon>Staphylococcaceae</taxon>
        <taxon>Staphylococcus</taxon>
    </lineage>
</organism>